<gene>
    <name type="primary">cspE</name>
    <name type="ordered locus">c0714</name>
</gene>
<keyword id="KW-0010">Activator</keyword>
<keyword id="KW-0963">Cytoplasm</keyword>
<keyword id="KW-0238">DNA-binding</keyword>
<keyword id="KW-1185">Reference proteome</keyword>
<keyword id="KW-0804">Transcription</keyword>
<keyword id="KW-0805">Transcription regulation</keyword>
<dbReference type="EMBL" id="AE014075">
    <property type="protein sequence ID" value="AAN79187.1"/>
    <property type="status" value="ALT_INIT"/>
    <property type="molecule type" value="Genomic_DNA"/>
</dbReference>
<dbReference type="RefSeq" id="WP_000034825.1">
    <property type="nucleotide sequence ID" value="NZ_CP051263.1"/>
</dbReference>
<dbReference type="SMR" id="P0A973"/>
<dbReference type="STRING" id="199310.c0714"/>
<dbReference type="GeneID" id="98387317"/>
<dbReference type="KEGG" id="ecc:c0714"/>
<dbReference type="eggNOG" id="COG1278">
    <property type="taxonomic scope" value="Bacteria"/>
</dbReference>
<dbReference type="HOGENOM" id="CLU_117621_2_0_6"/>
<dbReference type="Proteomes" id="UP000001410">
    <property type="component" value="Chromosome"/>
</dbReference>
<dbReference type="GO" id="GO:0005829">
    <property type="term" value="C:cytosol"/>
    <property type="evidence" value="ECO:0007669"/>
    <property type="project" value="UniProtKB-ARBA"/>
</dbReference>
<dbReference type="GO" id="GO:0003677">
    <property type="term" value="F:DNA binding"/>
    <property type="evidence" value="ECO:0007669"/>
    <property type="project" value="UniProtKB-KW"/>
</dbReference>
<dbReference type="CDD" id="cd04458">
    <property type="entry name" value="CSP_CDS"/>
    <property type="match status" value="1"/>
</dbReference>
<dbReference type="FunFam" id="2.40.50.140:FF:000006">
    <property type="entry name" value="Cold shock protein CspC"/>
    <property type="match status" value="1"/>
</dbReference>
<dbReference type="Gene3D" id="6.20.370.130">
    <property type="match status" value="1"/>
</dbReference>
<dbReference type="Gene3D" id="2.40.50.140">
    <property type="entry name" value="Nucleic acid-binding proteins"/>
    <property type="match status" value="1"/>
</dbReference>
<dbReference type="InterPro" id="IPR012156">
    <property type="entry name" value="Cold_shock_CspA"/>
</dbReference>
<dbReference type="InterPro" id="IPR050181">
    <property type="entry name" value="Cold_shock_domain"/>
</dbReference>
<dbReference type="InterPro" id="IPR011129">
    <property type="entry name" value="CSD"/>
</dbReference>
<dbReference type="InterPro" id="IPR019844">
    <property type="entry name" value="CSD_CS"/>
</dbReference>
<dbReference type="InterPro" id="IPR002059">
    <property type="entry name" value="CSP_DNA-bd"/>
</dbReference>
<dbReference type="InterPro" id="IPR012340">
    <property type="entry name" value="NA-bd_OB-fold"/>
</dbReference>
<dbReference type="NCBIfam" id="NF007062">
    <property type="entry name" value="PRK09507.1"/>
    <property type="match status" value="1"/>
</dbReference>
<dbReference type="NCBIfam" id="NF008190">
    <property type="entry name" value="PRK10943.1"/>
    <property type="match status" value="1"/>
</dbReference>
<dbReference type="PANTHER" id="PTHR11544">
    <property type="entry name" value="COLD SHOCK DOMAIN CONTAINING PROTEINS"/>
    <property type="match status" value="1"/>
</dbReference>
<dbReference type="Pfam" id="PF00313">
    <property type="entry name" value="CSD"/>
    <property type="match status" value="1"/>
</dbReference>
<dbReference type="PIRSF" id="PIRSF002599">
    <property type="entry name" value="Cold_shock_A"/>
    <property type="match status" value="1"/>
</dbReference>
<dbReference type="PRINTS" id="PR00050">
    <property type="entry name" value="COLDSHOCK"/>
</dbReference>
<dbReference type="SMART" id="SM00357">
    <property type="entry name" value="CSP"/>
    <property type="match status" value="1"/>
</dbReference>
<dbReference type="SUPFAM" id="SSF50249">
    <property type="entry name" value="Nucleic acid-binding proteins"/>
    <property type="match status" value="1"/>
</dbReference>
<dbReference type="PROSITE" id="PS00352">
    <property type="entry name" value="CSD_1"/>
    <property type="match status" value="1"/>
</dbReference>
<dbReference type="PROSITE" id="PS51857">
    <property type="entry name" value="CSD_2"/>
    <property type="match status" value="1"/>
</dbReference>
<feature type="initiator methionine" description="Removed" evidence="1">
    <location>
        <position position="1"/>
    </location>
</feature>
<feature type="chain" id="PRO_0000100255" description="Cold shock-like protein CspE">
    <location>
        <begin position="2"/>
        <end position="69"/>
    </location>
</feature>
<feature type="domain" description="CSD">
    <location>
        <begin position="6"/>
        <end position="66"/>
    </location>
</feature>
<proteinExistence type="inferred from homology"/>
<evidence type="ECO:0000250" key="1"/>
<evidence type="ECO:0000305" key="2"/>
<reference key="1">
    <citation type="journal article" date="2002" name="Proc. Natl. Acad. Sci. U.S.A.">
        <title>Extensive mosaic structure revealed by the complete genome sequence of uropathogenic Escherichia coli.</title>
        <authorList>
            <person name="Welch R.A."/>
            <person name="Burland V."/>
            <person name="Plunkett G. III"/>
            <person name="Redford P."/>
            <person name="Roesch P."/>
            <person name="Rasko D."/>
            <person name="Buckles E.L."/>
            <person name="Liou S.-R."/>
            <person name="Boutin A."/>
            <person name="Hackett J."/>
            <person name="Stroud D."/>
            <person name="Mayhew G.F."/>
            <person name="Rose D.J."/>
            <person name="Zhou S."/>
            <person name="Schwartz D.C."/>
            <person name="Perna N.T."/>
            <person name="Mobley H.L.T."/>
            <person name="Donnenberg M.S."/>
            <person name="Blattner F.R."/>
        </authorList>
    </citation>
    <scope>NUCLEOTIDE SEQUENCE [LARGE SCALE GENOMIC DNA]</scope>
    <source>
        <strain>CFT073 / ATCC 700928 / UPEC</strain>
    </source>
</reference>
<protein>
    <recommendedName>
        <fullName>Cold shock-like protein CspE</fullName>
        <shortName>CSP-E</shortName>
    </recommendedName>
</protein>
<organism>
    <name type="scientific">Escherichia coli O6:H1 (strain CFT073 / ATCC 700928 / UPEC)</name>
    <dbReference type="NCBI Taxonomy" id="199310"/>
    <lineage>
        <taxon>Bacteria</taxon>
        <taxon>Pseudomonadati</taxon>
        <taxon>Pseudomonadota</taxon>
        <taxon>Gammaproteobacteria</taxon>
        <taxon>Enterobacterales</taxon>
        <taxon>Enterobacteriaceae</taxon>
        <taxon>Escherichia</taxon>
    </lineage>
</organism>
<name>CSPE_ECOL6</name>
<sequence length="69" mass="7463">MSKIKGNVKWFNESKGFGFITPEDGSKDVFVHFSAIQTNGFKTLAEGQRVEFEITNGAKGPSAANVIAL</sequence>
<accession>P0A973</accession>
<accession>P36997</accession>
<accession>P77103</accession>
<accession>P80434</accession>
<comment type="subcellular location">
    <subcellularLocation>
        <location evidence="1">Cytoplasm</location>
    </subcellularLocation>
</comment>
<comment type="sequence caution" evidence="2">
    <conflict type="erroneous initiation">
        <sequence resource="EMBL-CDS" id="AAN79187"/>
    </conflict>
</comment>